<comment type="function">
    <text evidence="1">Catalyzes the deformylation of 4-deoxy-4-formamido-L-arabinose-phosphoundecaprenol to 4-amino-4-deoxy-L-arabinose-phosphoundecaprenol. The modified arabinose is attached to lipid A and is required for resistance to polymyxin and cationic antimicrobial peptides.</text>
</comment>
<comment type="catalytic activity">
    <reaction evidence="1">
        <text>4-deoxy-4-formamido-alpha-L-arabinopyranosyl di-trans,octa-cis-undecaprenyl phosphate + H2O = 4-amino-4-deoxy-alpha-L-arabinopyranosyl di-trans,octa-cis-undecaprenyl phosphate + formate</text>
        <dbReference type="Rhea" id="RHEA:27734"/>
        <dbReference type="ChEBI" id="CHEBI:15377"/>
        <dbReference type="ChEBI" id="CHEBI:15740"/>
        <dbReference type="ChEBI" id="CHEBI:58909"/>
        <dbReference type="ChEBI" id="CHEBI:60463"/>
        <dbReference type="EC" id="3.5.1.n3"/>
    </reaction>
</comment>
<comment type="pathway">
    <text evidence="1">Glycolipid biosynthesis; 4-amino-4-deoxy-alpha-L-arabinose undecaprenyl phosphate biosynthesis; 4-amino-4-deoxy-alpha-L-arabinose undecaprenyl phosphate from UDP-4-deoxy-4-formamido-beta-L-arabinose and undecaprenyl phosphate: step 2/2.</text>
</comment>
<comment type="pathway">
    <text evidence="1">Bacterial outer membrane biogenesis; lipopolysaccharide biosynthesis.</text>
</comment>
<comment type="similarity">
    <text evidence="1">Belongs to the polysaccharide deacetylase family. ArnD deformylase subfamily.</text>
</comment>
<sequence>MTKVGLRIDVDTFRGTREGVPRLLEILSKHNIQASIFFSVGPDNMGRHLWRLVKPQFLWKMLRSNAASLYGWDILLAGTAWPGKEIGHANADIIREAAKHHEVGLHAWDHHAWQAHSGNWDRQTMIDDIARGLRTLEEIIGQPVTCSAAAGWRADQQVIEAKEAFHLRYNSDCRGAMPFRPLLESGTPGTAQIPVTLPTWDEVIGRDVKAEDFNGWLLNRIQRDKGTPVYTIHAEVEGCAYQHNFVDLLKRAAQEGVTFCPLSELLSGTLPLGQVVRGNIAGREGWLGCQQMAGSH</sequence>
<protein>
    <recommendedName>
        <fullName evidence="1">Probable 4-deoxy-4-formamido-L-arabinose-phosphoundecaprenol deformylase ArnD</fullName>
        <ecNumber evidence="1">3.5.1.n3</ecNumber>
    </recommendedName>
</protein>
<reference key="1">
    <citation type="journal article" date="2006" name="Mol. Microbiol.">
        <title>Role of pathogenicity island-associated integrases in the genome plasticity of uropathogenic Escherichia coli strain 536.</title>
        <authorList>
            <person name="Hochhut B."/>
            <person name="Wilde C."/>
            <person name="Balling G."/>
            <person name="Middendorf B."/>
            <person name="Dobrindt U."/>
            <person name="Brzuszkiewicz E."/>
            <person name="Gottschalk G."/>
            <person name="Carniel E."/>
            <person name="Hacker J."/>
        </authorList>
    </citation>
    <scope>NUCLEOTIDE SEQUENCE [LARGE SCALE GENOMIC DNA]</scope>
    <source>
        <strain>536 / UPEC</strain>
    </source>
</reference>
<proteinExistence type="inferred from homology"/>
<dbReference type="EC" id="3.5.1.n3" evidence="1"/>
<dbReference type="EMBL" id="CP000247">
    <property type="protein sequence ID" value="ABG70293.1"/>
    <property type="molecule type" value="Genomic_DNA"/>
</dbReference>
<dbReference type="RefSeq" id="WP_000169713.1">
    <property type="nucleotide sequence ID" value="NC_008253.1"/>
</dbReference>
<dbReference type="SMR" id="Q0TFI6"/>
<dbReference type="KEGG" id="ecp:ECP_2299"/>
<dbReference type="HOGENOM" id="CLU_084199_0_0_6"/>
<dbReference type="UniPathway" id="UPA00030"/>
<dbReference type="UniPathway" id="UPA00036">
    <property type="reaction ID" value="UER00496"/>
</dbReference>
<dbReference type="Proteomes" id="UP000009182">
    <property type="component" value="Chromosome"/>
</dbReference>
<dbReference type="GO" id="GO:0016020">
    <property type="term" value="C:membrane"/>
    <property type="evidence" value="ECO:0007669"/>
    <property type="project" value="GOC"/>
</dbReference>
<dbReference type="GO" id="GO:0016811">
    <property type="term" value="F:hydrolase activity, acting on carbon-nitrogen (but not peptide) bonds, in linear amides"/>
    <property type="evidence" value="ECO:0007669"/>
    <property type="project" value="UniProtKB-UniRule"/>
</dbReference>
<dbReference type="GO" id="GO:0036108">
    <property type="term" value="P:4-amino-4-deoxy-alpha-L-arabinopyranosyl undecaprenyl phosphate biosynthetic process"/>
    <property type="evidence" value="ECO:0007669"/>
    <property type="project" value="UniProtKB-UniRule"/>
</dbReference>
<dbReference type="GO" id="GO:0009245">
    <property type="term" value="P:lipid A biosynthetic process"/>
    <property type="evidence" value="ECO:0007669"/>
    <property type="project" value="UniProtKB-UniRule"/>
</dbReference>
<dbReference type="GO" id="GO:0009103">
    <property type="term" value="P:lipopolysaccharide biosynthetic process"/>
    <property type="evidence" value="ECO:0007669"/>
    <property type="project" value="UniProtKB-UniRule"/>
</dbReference>
<dbReference type="GO" id="GO:0046677">
    <property type="term" value="P:response to antibiotic"/>
    <property type="evidence" value="ECO:0007669"/>
    <property type="project" value="UniProtKB-KW"/>
</dbReference>
<dbReference type="CDD" id="cd10939">
    <property type="entry name" value="CE4_ArnD"/>
    <property type="match status" value="1"/>
</dbReference>
<dbReference type="Gene3D" id="3.20.20.370">
    <property type="entry name" value="Glycoside hydrolase/deacetylase"/>
    <property type="match status" value="1"/>
</dbReference>
<dbReference type="HAMAP" id="MF_01870">
    <property type="entry name" value="ArnD"/>
    <property type="match status" value="1"/>
</dbReference>
<dbReference type="InterPro" id="IPR023557">
    <property type="entry name" value="ArnD"/>
</dbReference>
<dbReference type="InterPro" id="IPR011330">
    <property type="entry name" value="Glyco_hydro/deAcase_b/a-brl"/>
</dbReference>
<dbReference type="InterPro" id="IPR002509">
    <property type="entry name" value="NODB_dom"/>
</dbReference>
<dbReference type="InterPro" id="IPR050248">
    <property type="entry name" value="Polysacc_deacetylase_ArnD"/>
</dbReference>
<dbReference type="NCBIfam" id="NF011923">
    <property type="entry name" value="PRK15394.1"/>
    <property type="match status" value="1"/>
</dbReference>
<dbReference type="PANTHER" id="PTHR10587:SF137">
    <property type="entry name" value="4-DEOXY-4-FORMAMIDO-L-ARABINOSE-PHOSPHOUNDECAPRENOL DEFORMYLASE ARND-RELATED"/>
    <property type="match status" value="1"/>
</dbReference>
<dbReference type="PANTHER" id="PTHR10587">
    <property type="entry name" value="GLYCOSYL TRANSFERASE-RELATED"/>
    <property type="match status" value="1"/>
</dbReference>
<dbReference type="Pfam" id="PF01522">
    <property type="entry name" value="Polysacc_deac_1"/>
    <property type="match status" value="1"/>
</dbReference>
<dbReference type="SUPFAM" id="SSF88713">
    <property type="entry name" value="Glycoside hydrolase/deacetylase"/>
    <property type="match status" value="1"/>
</dbReference>
<dbReference type="PROSITE" id="PS51677">
    <property type="entry name" value="NODB"/>
    <property type="match status" value="1"/>
</dbReference>
<gene>
    <name evidence="1" type="primary">arnD</name>
    <name type="ordered locus">ECP_2299</name>
</gene>
<feature type="chain" id="PRO_0000383509" description="Probable 4-deoxy-4-formamido-L-arabinose-phosphoundecaprenol deformylase ArnD">
    <location>
        <begin position="1"/>
        <end position="296"/>
    </location>
</feature>
<feature type="domain" description="NodB homology" evidence="1">
    <location>
        <begin position="2"/>
        <end position="260"/>
    </location>
</feature>
<evidence type="ECO:0000255" key="1">
    <source>
        <dbReference type="HAMAP-Rule" id="MF_01870"/>
    </source>
</evidence>
<name>ARND_ECOL5</name>
<accession>Q0TFI6</accession>
<keyword id="KW-0046">Antibiotic resistance</keyword>
<keyword id="KW-0378">Hydrolase</keyword>
<keyword id="KW-0441">Lipid A biosynthesis</keyword>
<keyword id="KW-0444">Lipid biosynthesis</keyword>
<keyword id="KW-0443">Lipid metabolism</keyword>
<keyword id="KW-0448">Lipopolysaccharide biosynthesis</keyword>
<organism>
    <name type="scientific">Escherichia coli O6:K15:H31 (strain 536 / UPEC)</name>
    <dbReference type="NCBI Taxonomy" id="362663"/>
    <lineage>
        <taxon>Bacteria</taxon>
        <taxon>Pseudomonadati</taxon>
        <taxon>Pseudomonadota</taxon>
        <taxon>Gammaproteobacteria</taxon>
        <taxon>Enterobacterales</taxon>
        <taxon>Enterobacteriaceae</taxon>
        <taxon>Escherichia</taxon>
    </lineage>
</organism>